<sequence length="156" mass="16793">MQHSQLSPNARQQLAETVILNKARLGLSWQDLADGTGLALTFVTAALLGQHALPEAAARKVAGQLGLDDDAVLLLQTIPLRGSIPGGIPTDPTIYRFYEMLQVYGSTLKALVHEQFGDGIISAINFKLDIQKVEDPEGGSRAVITLDGKYLPTKPF</sequence>
<dbReference type="EC" id="4.2.1.104" evidence="1"/>
<dbReference type="EMBL" id="CP000744">
    <property type="protein sequence ID" value="ABR81635.1"/>
    <property type="molecule type" value="Genomic_DNA"/>
</dbReference>
<dbReference type="RefSeq" id="WP_012075994.1">
    <property type="nucleotide sequence ID" value="NC_009656.1"/>
</dbReference>
<dbReference type="SMR" id="A6V6B1"/>
<dbReference type="KEGG" id="pap:PSPA7_3236"/>
<dbReference type="HOGENOM" id="CLU_103452_1_1_6"/>
<dbReference type="Proteomes" id="UP000001582">
    <property type="component" value="Chromosome"/>
</dbReference>
<dbReference type="GO" id="GO:0008824">
    <property type="term" value="F:cyanate hydratase activity"/>
    <property type="evidence" value="ECO:0007669"/>
    <property type="project" value="UniProtKB-UniRule"/>
</dbReference>
<dbReference type="GO" id="GO:0003677">
    <property type="term" value="F:DNA binding"/>
    <property type="evidence" value="ECO:0007669"/>
    <property type="project" value="InterPro"/>
</dbReference>
<dbReference type="GO" id="GO:0009439">
    <property type="term" value="P:cyanate metabolic process"/>
    <property type="evidence" value="ECO:0007669"/>
    <property type="project" value="UniProtKB-UniRule"/>
</dbReference>
<dbReference type="CDD" id="cd00559">
    <property type="entry name" value="Cyanase_C"/>
    <property type="match status" value="1"/>
</dbReference>
<dbReference type="Gene3D" id="3.30.1160.10">
    <property type="entry name" value="Cyanate lyase, C-terminal domain"/>
    <property type="match status" value="1"/>
</dbReference>
<dbReference type="Gene3D" id="1.10.260.40">
    <property type="entry name" value="lambda repressor-like DNA-binding domains"/>
    <property type="match status" value="1"/>
</dbReference>
<dbReference type="HAMAP" id="MF_00535">
    <property type="entry name" value="Cyanate_hydrat"/>
    <property type="match status" value="1"/>
</dbReference>
<dbReference type="InterPro" id="IPR008076">
    <property type="entry name" value="Cyanase"/>
</dbReference>
<dbReference type="InterPro" id="IPR003712">
    <property type="entry name" value="Cyanate_lyase_C"/>
</dbReference>
<dbReference type="InterPro" id="IPR036581">
    <property type="entry name" value="Cyanate_lyase_C_sf"/>
</dbReference>
<dbReference type="InterPro" id="IPR048564">
    <property type="entry name" value="CYNS_N"/>
</dbReference>
<dbReference type="InterPro" id="IPR010982">
    <property type="entry name" value="Lambda_DNA-bd_dom_sf"/>
</dbReference>
<dbReference type="NCBIfam" id="TIGR00673">
    <property type="entry name" value="cynS"/>
    <property type="match status" value="1"/>
</dbReference>
<dbReference type="NCBIfam" id="NF002773">
    <property type="entry name" value="PRK02866.1"/>
    <property type="match status" value="1"/>
</dbReference>
<dbReference type="PANTHER" id="PTHR34186">
    <property type="entry name" value="CYANATE HYDRATASE"/>
    <property type="match status" value="1"/>
</dbReference>
<dbReference type="PANTHER" id="PTHR34186:SF2">
    <property type="entry name" value="CYANATE HYDRATASE"/>
    <property type="match status" value="1"/>
</dbReference>
<dbReference type="Pfam" id="PF02560">
    <property type="entry name" value="Cyanate_lyase"/>
    <property type="match status" value="1"/>
</dbReference>
<dbReference type="Pfam" id="PF21291">
    <property type="entry name" value="CYNS_N"/>
    <property type="match status" value="1"/>
</dbReference>
<dbReference type="PIRSF" id="PIRSF001263">
    <property type="entry name" value="Cyanate_hydratas"/>
    <property type="match status" value="1"/>
</dbReference>
<dbReference type="PRINTS" id="PR01693">
    <property type="entry name" value="CYANASE"/>
</dbReference>
<dbReference type="SMART" id="SM01116">
    <property type="entry name" value="Cyanate_lyase"/>
    <property type="match status" value="1"/>
</dbReference>
<dbReference type="SUPFAM" id="SSF55234">
    <property type="entry name" value="Cyanase C-terminal domain"/>
    <property type="match status" value="1"/>
</dbReference>
<dbReference type="SUPFAM" id="SSF47413">
    <property type="entry name" value="lambda repressor-like DNA-binding domains"/>
    <property type="match status" value="1"/>
</dbReference>
<evidence type="ECO:0000255" key="1">
    <source>
        <dbReference type="HAMAP-Rule" id="MF_00535"/>
    </source>
</evidence>
<proteinExistence type="inferred from homology"/>
<accession>A6V6B1</accession>
<name>CYNS_PSEP7</name>
<gene>
    <name evidence="1" type="primary">cynS</name>
    <name type="ordered locus">PSPA7_3236</name>
</gene>
<protein>
    <recommendedName>
        <fullName evidence="1">Cyanate hydratase</fullName>
        <shortName evidence="1">Cyanase</shortName>
        <ecNumber evidence="1">4.2.1.104</ecNumber>
    </recommendedName>
    <alternativeName>
        <fullName evidence="1">Cyanate hydrolase</fullName>
    </alternativeName>
    <alternativeName>
        <fullName evidence="1">Cyanate lyase</fullName>
    </alternativeName>
</protein>
<reference key="1">
    <citation type="submission" date="2007-06" db="EMBL/GenBank/DDBJ databases">
        <authorList>
            <person name="Dodson R.J."/>
            <person name="Harkins D."/>
            <person name="Paulsen I.T."/>
        </authorList>
    </citation>
    <scope>NUCLEOTIDE SEQUENCE [LARGE SCALE GENOMIC DNA]</scope>
    <source>
        <strain>DSM 24068 / PA7</strain>
    </source>
</reference>
<feature type="chain" id="PRO_1000051482" description="Cyanate hydratase">
    <location>
        <begin position="1"/>
        <end position="156"/>
    </location>
</feature>
<feature type="active site" evidence="1">
    <location>
        <position position="96"/>
    </location>
</feature>
<feature type="active site" evidence="1">
    <location>
        <position position="99"/>
    </location>
</feature>
<feature type="active site" evidence="1">
    <location>
        <position position="122"/>
    </location>
</feature>
<organism>
    <name type="scientific">Pseudomonas paraeruginosa (strain DSM 24068 / PA7)</name>
    <name type="common">Pseudomonas aeruginosa (strain PA7)</name>
    <dbReference type="NCBI Taxonomy" id="381754"/>
    <lineage>
        <taxon>Bacteria</taxon>
        <taxon>Pseudomonadati</taxon>
        <taxon>Pseudomonadota</taxon>
        <taxon>Gammaproteobacteria</taxon>
        <taxon>Pseudomonadales</taxon>
        <taxon>Pseudomonadaceae</taxon>
        <taxon>Pseudomonas</taxon>
        <taxon>Pseudomonas paraeruginosa</taxon>
    </lineage>
</organism>
<comment type="function">
    <text evidence="1">Catalyzes the reaction of cyanate with bicarbonate to produce ammonia and carbon dioxide.</text>
</comment>
<comment type="catalytic activity">
    <reaction evidence="1">
        <text>cyanate + hydrogencarbonate + 3 H(+) = NH4(+) + 2 CO2</text>
        <dbReference type="Rhea" id="RHEA:11120"/>
        <dbReference type="ChEBI" id="CHEBI:15378"/>
        <dbReference type="ChEBI" id="CHEBI:16526"/>
        <dbReference type="ChEBI" id="CHEBI:17544"/>
        <dbReference type="ChEBI" id="CHEBI:28938"/>
        <dbReference type="ChEBI" id="CHEBI:29195"/>
        <dbReference type="EC" id="4.2.1.104"/>
    </reaction>
</comment>
<comment type="similarity">
    <text evidence="1">Belongs to the cyanase family.</text>
</comment>
<keyword id="KW-0456">Lyase</keyword>